<gene>
    <name type="primary">GBPH</name>
</gene>
<accession>P32072</accession>
<proteinExistence type="evidence at transcript level"/>
<sequence>MRISKASNIESTGVSNCKNFNSKNCSKYSLMEVQNKNEKKRSLTSFHAKNITLIFGIIYVALLGVYICASQYKQAADYSFRESRVLAEGKSTSKKNAKTALRKTKQTTLTSADPEGQIMKAWAADPEYRKHLNVLYQILNNTDPNDELETSADPEGQIMKAYAADPEYRKHLNVLYQILNNTDPNDEVESSADPEGQIMKAYAADPEYRKHVNVLYQILNNTDPNDELETSADPEGQIMKAYAADPEYRKHVNVLYQILNHTDSSEVETSADPEGQIMKAYAADPEYRKHVNVLYQILNHTDSSEVETSADPEGQIMKAYAADPEYRKHVNVLYQILNNTDPNDELETSADPEGQIMKAYAADPEYRKHVNVLYQILNNTDPNDELETSADPEGQIMKAYAADPEYRKHVNVLYQILNNTDPNDESS</sequence>
<protein>
    <recommendedName>
        <fullName>Glycophorin-binding protein-related antigen</fullName>
    </recommendedName>
</protein>
<feature type="chain" id="PRO_0000217187" description="Glycophorin-binding protein-related antigen">
    <location>
        <begin position="1"/>
        <end position="427"/>
    </location>
</feature>
<feature type="repeat" description="GBP 1">
    <location>
        <begin position="109"/>
        <end position="149"/>
    </location>
</feature>
<feature type="repeat" description="GBP 2">
    <location>
        <begin position="150"/>
        <end position="189"/>
    </location>
</feature>
<feature type="repeat" description="GBP 3">
    <location>
        <begin position="190"/>
        <end position="229"/>
    </location>
</feature>
<feature type="repeat" description="GBP 4">
    <location>
        <begin position="230"/>
        <end position="269"/>
    </location>
</feature>
<feature type="repeat" description="GBP 5">
    <location>
        <begin position="270"/>
        <end position="307"/>
    </location>
</feature>
<feature type="repeat" description="GBP 6">
    <location>
        <begin position="308"/>
        <end position="347"/>
    </location>
</feature>
<feature type="repeat" description="GBP 7">
    <location>
        <begin position="348"/>
        <end position="387"/>
    </location>
</feature>
<feature type="repeat" description="GBP 8">
    <location>
        <begin position="388"/>
        <end position="427"/>
    </location>
</feature>
<name>GBPH_PLAFB</name>
<organism>
    <name type="scientific">Plasmodium falciparum (isolate FCBR / Columbia)</name>
    <dbReference type="NCBI Taxonomy" id="33631"/>
    <lineage>
        <taxon>Eukaryota</taxon>
        <taxon>Sar</taxon>
        <taxon>Alveolata</taxon>
        <taxon>Apicomplexa</taxon>
        <taxon>Aconoidasida</taxon>
        <taxon>Haemosporida</taxon>
        <taxon>Plasmodiidae</taxon>
        <taxon>Plasmodium</taxon>
        <taxon>Plasmodium (Laverania)</taxon>
    </lineage>
</organism>
<reference key="1">
    <citation type="journal article" date="1991" name="Mol. Biochem. Parasitol.">
        <title>A Plasmodium falciparum blood stage antigen highly homologous to the glycophorin binding protein GBP.</title>
        <authorList>
            <person name="Nolte D."/>
            <person name="Hundt E."/>
            <person name="Langsley G."/>
            <person name="Knapp B."/>
        </authorList>
    </citation>
    <scope>NUCLEOTIDE SEQUENCE [GENOMIC DNA]</scope>
</reference>
<comment type="developmental stage">
    <text>Expressed during the blood stage of the parasite.</text>
</comment>
<comment type="miscellaneous">
    <text>P.falciparum undergoes three cycles of development in its vertebrate host: the hepatic cycle; the asexual blood cycle, which includes the extracellular merozoite and the intraerythrocytic schizont; and the sexual gametocyte cycle.</text>
</comment>
<keyword id="KW-0461">Malaria</keyword>
<keyword id="KW-0677">Repeat</keyword>
<dbReference type="EMBL" id="M65160">
    <property type="protein sequence ID" value="AAA29609.1"/>
    <property type="molecule type" value="Genomic_DNA"/>
</dbReference>
<dbReference type="PIR" id="A45636">
    <property type="entry name" value="A45636"/>
</dbReference>
<dbReference type="InterPro" id="IPR003681">
    <property type="entry name" value="Glycophorin-bd"/>
</dbReference>
<dbReference type="Pfam" id="PF02526">
    <property type="entry name" value="GBP_repeat"/>
    <property type="match status" value="8"/>
</dbReference>
<dbReference type="PROSITE" id="PS51069">
    <property type="entry name" value="GBP"/>
    <property type="match status" value="8"/>
</dbReference>